<gene>
    <name type="primary">trpC</name>
</gene>
<reference key="1">
    <citation type="journal article" date="1990" name="Gene">
        <title>The structure of the trpE, trpD and 5' trpC genes of Bacillus pumilus.</title>
        <authorList>
            <person name="Rivas M.V."/>
            <person name="Jarvis E.D."/>
            <person name="Rudner R."/>
        </authorList>
    </citation>
    <scope>NUCLEOTIDE SEQUENCE [GENOMIC DNA]</scope>
    <source>
        <strain>RUB502</strain>
    </source>
</reference>
<reference key="2">
    <citation type="journal article" date="1990" name="Gene">
        <authorList>
            <person name="Rivas M.V."/>
            <person name="Jarvis E.D."/>
            <person name="Rudner R."/>
        </authorList>
    </citation>
    <scope>ERRATUM OF PUBMED:2110100</scope>
</reference>
<keyword id="KW-0028">Amino-acid biosynthesis</keyword>
<keyword id="KW-0057">Aromatic amino acid biosynthesis</keyword>
<keyword id="KW-0210">Decarboxylase</keyword>
<keyword id="KW-0456">Lyase</keyword>
<keyword id="KW-0822">Tryptophan biosynthesis</keyword>
<name>TRPC_BACPU</name>
<evidence type="ECO:0000305" key="1"/>
<comment type="catalytic activity">
    <reaction>
        <text>1-(2-carboxyphenylamino)-1-deoxy-D-ribulose 5-phosphate + H(+) = (1S,2R)-1-C-(indol-3-yl)glycerol 3-phosphate + CO2 + H2O</text>
        <dbReference type="Rhea" id="RHEA:23476"/>
        <dbReference type="ChEBI" id="CHEBI:15377"/>
        <dbReference type="ChEBI" id="CHEBI:15378"/>
        <dbReference type="ChEBI" id="CHEBI:16526"/>
        <dbReference type="ChEBI" id="CHEBI:58613"/>
        <dbReference type="ChEBI" id="CHEBI:58866"/>
        <dbReference type="EC" id="4.1.1.48"/>
    </reaction>
</comment>
<comment type="pathway">
    <text>Amino-acid biosynthesis; L-tryptophan biosynthesis; L-tryptophan from chorismate: step 4/5.</text>
</comment>
<comment type="similarity">
    <text evidence="1">Belongs to the TrpC family.</text>
</comment>
<protein>
    <recommendedName>
        <fullName>Indole-3-glycerol phosphate synthase</fullName>
        <shortName>IGPS</shortName>
        <ecNumber>4.1.1.48</ecNumber>
    </recommendedName>
</protein>
<proteinExistence type="inferred from homology"/>
<feature type="chain" id="PRO_0000154212" description="Indole-3-glycerol phosphate synthase">
    <location>
        <begin position="1"/>
        <end position="68" status="greater than"/>
    </location>
</feature>
<feature type="non-terminal residue">
    <location>
        <position position="68"/>
    </location>
</feature>
<sequence length="68" mass="7688">MLNQIIARKKEHIQTLQLPVDGHFERRSFKEALMNPHRSIGLIAEVKKASPSKGIIQPNFDPLQTAKA</sequence>
<dbReference type="EC" id="4.1.1.48"/>
<dbReference type="EMBL" id="M36468">
    <property type="protein sequence ID" value="AAB02274.1"/>
    <property type="molecule type" value="Genomic_DNA"/>
</dbReference>
<dbReference type="PIR" id="JH0100">
    <property type="entry name" value="JH0100"/>
</dbReference>
<dbReference type="SMR" id="P18268"/>
<dbReference type="UniPathway" id="UPA00035">
    <property type="reaction ID" value="UER00043"/>
</dbReference>
<dbReference type="GO" id="GO:0004425">
    <property type="term" value="F:indole-3-glycerol-phosphate synthase activity"/>
    <property type="evidence" value="ECO:0007669"/>
    <property type="project" value="UniProtKB-EC"/>
</dbReference>
<dbReference type="GO" id="GO:0000162">
    <property type="term" value="P:L-tryptophan biosynthetic process"/>
    <property type="evidence" value="ECO:0007669"/>
    <property type="project" value="UniProtKB-UniPathway"/>
</dbReference>
<dbReference type="Gene3D" id="3.20.20.70">
    <property type="entry name" value="Aldolase class I"/>
    <property type="match status" value="1"/>
</dbReference>
<dbReference type="InterPro" id="IPR013785">
    <property type="entry name" value="Aldolase_TIM"/>
</dbReference>
<dbReference type="InterPro" id="IPR013798">
    <property type="entry name" value="Indole-3-glycerol_P_synth_dom"/>
</dbReference>
<dbReference type="InterPro" id="IPR001468">
    <property type="entry name" value="Indole-3-GlycerolPSynthase_CS"/>
</dbReference>
<dbReference type="InterPro" id="IPR011060">
    <property type="entry name" value="RibuloseP-bd_barrel"/>
</dbReference>
<dbReference type="Pfam" id="PF00218">
    <property type="entry name" value="IGPS"/>
    <property type="match status" value="1"/>
</dbReference>
<dbReference type="SUPFAM" id="SSF51366">
    <property type="entry name" value="Ribulose-phoshate binding barrel"/>
    <property type="match status" value="1"/>
</dbReference>
<dbReference type="PROSITE" id="PS00614">
    <property type="entry name" value="IGPS"/>
    <property type="match status" value="1"/>
</dbReference>
<organism>
    <name type="scientific">Bacillus pumilus</name>
    <name type="common">Bacillus mesentericus</name>
    <dbReference type="NCBI Taxonomy" id="1408"/>
    <lineage>
        <taxon>Bacteria</taxon>
        <taxon>Bacillati</taxon>
        <taxon>Bacillota</taxon>
        <taxon>Bacilli</taxon>
        <taxon>Bacillales</taxon>
        <taxon>Bacillaceae</taxon>
        <taxon>Bacillus</taxon>
    </lineage>
</organism>
<accession>P18268</accession>